<dbReference type="EMBL" id="AB237912">
    <property type="protein sequence ID" value="BAE46628.1"/>
    <property type="molecule type" value="Genomic_DNA"/>
</dbReference>
<dbReference type="RefSeq" id="YP_358653.1">
    <property type="nucleotide sequence ID" value="NC_007500.1"/>
</dbReference>
<dbReference type="SMR" id="Q3C1G1"/>
<dbReference type="GeneID" id="3735192"/>
<dbReference type="KEGG" id="nsy:3735192"/>
<dbReference type="OrthoDB" id="19084at4085"/>
<dbReference type="Proteomes" id="UP000189701">
    <property type="component" value="Chloroplast Pltd"/>
</dbReference>
<dbReference type="GO" id="GO:0009507">
    <property type="term" value="C:chloroplast"/>
    <property type="evidence" value="ECO:0007669"/>
    <property type="project" value="UniProtKB-SubCell"/>
</dbReference>
<dbReference type="GO" id="GO:0005739">
    <property type="term" value="C:mitochondrion"/>
    <property type="evidence" value="ECO:0007669"/>
    <property type="project" value="GOC"/>
</dbReference>
<dbReference type="GO" id="GO:0015935">
    <property type="term" value="C:small ribosomal subunit"/>
    <property type="evidence" value="ECO:0007669"/>
    <property type="project" value="TreeGrafter"/>
</dbReference>
<dbReference type="GO" id="GO:0003735">
    <property type="term" value="F:structural constituent of ribosome"/>
    <property type="evidence" value="ECO:0007669"/>
    <property type="project" value="InterPro"/>
</dbReference>
<dbReference type="GO" id="GO:0032543">
    <property type="term" value="P:mitochondrial translation"/>
    <property type="evidence" value="ECO:0007669"/>
    <property type="project" value="TreeGrafter"/>
</dbReference>
<dbReference type="FunFam" id="3.30.1320.10:FF:000003">
    <property type="entry name" value="30S ribosomal protein S16, chloroplastic"/>
    <property type="match status" value="1"/>
</dbReference>
<dbReference type="Gene3D" id="3.30.1320.10">
    <property type="match status" value="1"/>
</dbReference>
<dbReference type="HAMAP" id="MF_00385">
    <property type="entry name" value="Ribosomal_bS16"/>
    <property type="match status" value="1"/>
</dbReference>
<dbReference type="InterPro" id="IPR000307">
    <property type="entry name" value="Ribosomal_bS16"/>
</dbReference>
<dbReference type="InterPro" id="IPR020592">
    <property type="entry name" value="Ribosomal_bS16_CS"/>
</dbReference>
<dbReference type="InterPro" id="IPR023803">
    <property type="entry name" value="Ribosomal_bS16_dom_sf"/>
</dbReference>
<dbReference type="NCBIfam" id="TIGR00002">
    <property type="entry name" value="S16"/>
    <property type="match status" value="1"/>
</dbReference>
<dbReference type="PANTHER" id="PTHR12919">
    <property type="entry name" value="30S RIBOSOMAL PROTEIN S16"/>
    <property type="match status" value="1"/>
</dbReference>
<dbReference type="PANTHER" id="PTHR12919:SF20">
    <property type="entry name" value="SMALL RIBOSOMAL SUBUNIT PROTEIN BS16M"/>
    <property type="match status" value="1"/>
</dbReference>
<dbReference type="Pfam" id="PF00886">
    <property type="entry name" value="Ribosomal_S16"/>
    <property type="match status" value="1"/>
</dbReference>
<dbReference type="SUPFAM" id="SSF54565">
    <property type="entry name" value="Ribosomal protein S16"/>
    <property type="match status" value="1"/>
</dbReference>
<dbReference type="PROSITE" id="PS00732">
    <property type="entry name" value="RIBOSOMAL_S16"/>
    <property type="match status" value="1"/>
</dbReference>
<organism>
    <name type="scientific">Nicotiana sylvestris</name>
    <name type="common">Wood tobacco</name>
    <name type="synonym">South American tobacco</name>
    <dbReference type="NCBI Taxonomy" id="4096"/>
    <lineage>
        <taxon>Eukaryota</taxon>
        <taxon>Viridiplantae</taxon>
        <taxon>Streptophyta</taxon>
        <taxon>Embryophyta</taxon>
        <taxon>Tracheophyta</taxon>
        <taxon>Spermatophyta</taxon>
        <taxon>Magnoliopsida</taxon>
        <taxon>eudicotyledons</taxon>
        <taxon>Gunneridae</taxon>
        <taxon>Pentapetalae</taxon>
        <taxon>asterids</taxon>
        <taxon>lamiids</taxon>
        <taxon>Solanales</taxon>
        <taxon>Solanaceae</taxon>
        <taxon>Nicotianoideae</taxon>
        <taxon>Nicotianeae</taxon>
        <taxon>Nicotiana</taxon>
    </lineage>
</organism>
<accession>Q3C1G1</accession>
<proteinExistence type="inferred from homology"/>
<geneLocation type="chloroplast"/>
<gene>
    <name evidence="1" type="primary">rps16</name>
</gene>
<protein>
    <recommendedName>
        <fullName evidence="1">Small ribosomal subunit protein bS16c</fullName>
    </recommendedName>
    <alternativeName>
        <fullName evidence="2">30S ribosomal protein S16, chloroplastic</fullName>
    </alternativeName>
</protein>
<comment type="subcellular location">
    <subcellularLocation>
        <location>Plastid</location>
        <location>Chloroplast</location>
    </subcellularLocation>
</comment>
<comment type="similarity">
    <text evidence="1">Belongs to the bacterial ribosomal protein bS16 family.</text>
</comment>
<reference key="1">
    <citation type="journal article" date="2006" name="Mol. Genet. Genomics">
        <title>The chloroplast genome of Nicotiana sylvestris and Nicotiana tomentosiformis: complete sequencing confirms that the Nicotiana sylvestris progenitor is the maternal genome donor of Nicotiana tabacum.</title>
        <authorList>
            <person name="Yukawa M."/>
            <person name="Tsudzuki T."/>
            <person name="Sugiura M."/>
        </authorList>
    </citation>
    <scope>NUCLEOTIDE SEQUENCE [LARGE SCALE GENOMIC DNA]</scope>
</reference>
<name>RR16_NICSY</name>
<evidence type="ECO:0000255" key="1">
    <source>
        <dbReference type="HAMAP-Rule" id="MF_00385"/>
    </source>
</evidence>
<evidence type="ECO:0000305" key="2"/>
<keyword id="KW-0150">Chloroplast</keyword>
<keyword id="KW-0934">Plastid</keyword>
<keyword id="KW-1185">Reference proteome</keyword>
<keyword id="KW-0687">Ribonucleoprotein</keyword>
<keyword id="KW-0689">Ribosomal protein</keyword>
<sequence length="85" mass="9921">MVKLRLKRCGRKQRAVYRIVAIDVRSRREGKDLRKVGFYDPIKNQTYLNVPAILYFLEKGAQPTGTVQDILKKAEVFKELRPNQS</sequence>
<feature type="chain" id="PRO_0000276954" description="Small ribosomal subunit protein bS16c">
    <location>
        <begin position="1"/>
        <end position="85"/>
    </location>
</feature>